<proteinExistence type="inferred from homology"/>
<comment type="function">
    <text>This alpha-adrenergic receptor mediates its effect through the influx of extracellular calcium.</text>
</comment>
<comment type="subunit">
    <text evidence="2">Interacts with FLNA (via filamin repeat 21); increases PKA-mediated phosphorylation of FLNA.</text>
</comment>
<comment type="subcellular location">
    <subcellularLocation>
        <location>Cell membrane</location>
        <topology>Multi-pass membrane protein</topology>
    </subcellularLocation>
</comment>
<comment type="PTM">
    <text evidence="3">Palmitoylated. Palmitoylation by ZDHHC21 may increase the expression of the receptor and regulate downstream signaling.</text>
</comment>
<comment type="similarity">
    <text evidence="5">Belongs to the G-protein coupled receptor 1 family. Adrenergic receptor subfamily. ADRA1D sub-subfamily.</text>
</comment>
<name>ADA1D_PIG</name>
<accession>Q9TTM9</accession>
<feature type="chain" id="PRO_0000069075" description="Alpha-1D adrenergic receptor">
    <location>
        <begin position="1"/>
        <end position="571"/>
    </location>
</feature>
<feature type="topological domain" description="Extracellular" evidence="1">
    <location>
        <begin position="1"/>
        <end position="94"/>
    </location>
</feature>
<feature type="transmembrane region" description="Helical; Name=1" evidence="1">
    <location>
        <begin position="95"/>
        <end position="120"/>
    </location>
</feature>
<feature type="topological domain" description="Cytoplasmic" evidence="1">
    <location>
        <begin position="121"/>
        <end position="132"/>
    </location>
</feature>
<feature type="transmembrane region" description="Helical; Name=2" evidence="1">
    <location>
        <begin position="133"/>
        <end position="158"/>
    </location>
</feature>
<feature type="topological domain" description="Extracellular" evidence="1">
    <location>
        <begin position="159"/>
        <end position="168"/>
    </location>
</feature>
<feature type="transmembrane region" description="Helical; Name=3" evidence="1">
    <location>
        <begin position="169"/>
        <end position="191"/>
    </location>
</feature>
<feature type="topological domain" description="Cytoplasmic" evidence="1">
    <location>
        <begin position="192"/>
        <end position="212"/>
    </location>
</feature>
<feature type="transmembrane region" description="Helical; Name=4" evidence="1">
    <location>
        <begin position="213"/>
        <end position="237"/>
    </location>
</feature>
<feature type="topological domain" description="Extracellular" evidence="1">
    <location>
        <begin position="238"/>
        <end position="250"/>
    </location>
</feature>
<feature type="transmembrane region" description="Helical; Name=5" evidence="1">
    <location>
        <begin position="251"/>
        <end position="274"/>
    </location>
</feature>
<feature type="topological domain" description="Cytoplasmic" evidence="1">
    <location>
        <begin position="275"/>
        <end position="348"/>
    </location>
</feature>
<feature type="transmembrane region" description="Helical; Name=6" evidence="1">
    <location>
        <begin position="349"/>
        <end position="373"/>
    </location>
</feature>
<feature type="topological domain" description="Extracellular" evidence="1">
    <location>
        <begin position="374"/>
        <end position="380"/>
    </location>
</feature>
<feature type="transmembrane region" description="Helical; Name=7" evidence="1">
    <location>
        <begin position="381"/>
        <end position="405"/>
    </location>
</feature>
<feature type="topological domain" description="Cytoplasmic" evidence="1">
    <location>
        <begin position="406"/>
        <end position="571"/>
    </location>
</feature>
<feature type="region of interest" description="Disordered" evidence="6">
    <location>
        <begin position="13"/>
        <end position="75"/>
    </location>
</feature>
<feature type="region of interest" description="Disordered" evidence="6">
    <location>
        <begin position="465"/>
        <end position="487"/>
    </location>
</feature>
<feature type="compositionally biased region" description="Gly residues" evidence="6">
    <location>
        <begin position="19"/>
        <end position="34"/>
    </location>
</feature>
<feature type="compositionally biased region" description="Low complexity" evidence="6">
    <location>
        <begin position="35"/>
        <end position="47"/>
    </location>
</feature>
<feature type="compositionally biased region" description="Gly residues" evidence="6">
    <location>
        <begin position="48"/>
        <end position="57"/>
    </location>
</feature>
<feature type="lipid moiety-binding region" description="S-palmitoyl cysteine" evidence="4">
    <location>
        <position position="419"/>
    </location>
</feature>
<feature type="glycosylation site" description="N-linked (GlcNAc...) asparagine" evidence="4">
    <location>
        <position position="64"/>
    </location>
</feature>
<feature type="glycosylation site" description="N-linked (GlcNAc...) asparagine" evidence="4">
    <location>
        <position position="81"/>
    </location>
</feature>
<organism>
    <name type="scientific">Sus scrofa</name>
    <name type="common">Pig</name>
    <dbReference type="NCBI Taxonomy" id="9823"/>
    <lineage>
        <taxon>Eukaryota</taxon>
        <taxon>Metazoa</taxon>
        <taxon>Chordata</taxon>
        <taxon>Craniata</taxon>
        <taxon>Vertebrata</taxon>
        <taxon>Euteleostomi</taxon>
        <taxon>Mammalia</taxon>
        <taxon>Eutheria</taxon>
        <taxon>Laurasiatheria</taxon>
        <taxon>Artiodactyla</taxon>
        <taxon>Suina</taxon>
        <taxon>Suidae</taxon>
        <taxon>Sus</taxon>
    </lineage>
</organism>
<reference key="1">
    <citation type="submission" date="1999-10" db="EMBL/GenBank/DDBJ databases">
        <title>Characterization of the pig alpha-1D adrenergic receptor.</title>
        <authorList>
            <person name="Uhlen S."/>
            <person name="Wraith A."/>
        </authorList>
    </citation>
    <scope>NUCLEOTIDE SEQUENCE [GENOMIC DNA]</scope>
</reference>
<sequence length="571" mass="60699">MTFRDLLSVNFEGSRSDGSAGGASAGGSGGGSGGAAASEGRAVDGVPGTAGSGGVVGAGSDENNRSSAGEPGAAGAGGEVNGTAAVGGLVVSAQGVGVGVFLAAFILMAVAGNLLVILSVACNRHLQTVTNYFIVNLAVADLLLSATVLPFSATMEVLGFWAFGRAFCDVWAAVDVLCCTASILSLCTISVDRYVGVRHSLKYPSIMTERKAAAILALLWAVAIVVSVGPLLGWKEPVPPDERFCGITEEAGYAVFSSLCSFYLPMAVIVVMYCRVYVVARSTTRSLEAGVKRERGKASEVVLRIHCRGSSTGTDRGHGAMRSTKGHTFRSSLSLRLLKFSREKKAAKTLAIVVGVFVLCWFPFFFVLPLGSLFPQLKPSEGVFKVIFWLGYFNSCVNPLIYPCSSREFKRAFLRLLRCQCHHSRRRRRPLWRAYGHHWLASNGGPRPDCAPGLGAAPREAPLALPAPEATDTPSAPEAQAPVVGRRKPPYSFRDWRLLGPFRRPTTQLRAKVSSLSQKIRAGSAPCAEAPCALRSEVEAVSLNVPHDAAEGATWQAYELADYSHLRETDI</sequence>
<protein>
    <recommendedName>
        <fullName>Alpha-1D adrenergic receptor</fullName>
    </recommendedName>
    <alternativeName>
        <fullName>Alpha-1D adrenoreceptor</fullName>
        <shortName>Alpha-1D adrenoceptor</shortName>
    </alternativeName>
</protein>
<keyword id="KW-1003">Cell membrane</keyword>
<keyword id="KW-0297">G-protein coupled receptor</keyword>
<keyword id="KW-0325">Glycoprotein</keyword>
<keyword id="KW-0449">Lipoprotein</keyword>
<keyword id="KW-0472">Membrane</keyword>
<keyword id="KW-0564">Palmitate</keyword>
<keyword id="KW-0675">Receptor</keyword>
<keyword id="KW-1185">Reference proteome</keyword>
<keyword id="KW-0807">Transducer</keyword>
<keyword id="KW-0812">Transmembrane</keyword>
<keyword id="KW-1133">Transmembrane helix</keyword>
<gene>
    <name type="primary">ADRA1D</name>
</gene>
<evidence type="ECO:0000250" key="1"/>
<evidence type="ECO:0000250" key="2">
    <source>
        <dbReference type="UniProtKB" id="P25100"/>
    </source>
</evidence>
<evidence type="ECO:0000250" key="3">
    <source>
        <dbReference type="UniProtKB" id="P97714"/>
    </source>
</evidence>
<evidence type="ECO:0000255" key="4"/>
<evidence type="ECO:0000255" key="5">
    <source>
        <dbReference type="PROSITE-ProRule" id="PRU00521"/>
    </source>
</evidence>
<evidence type="ECO:0000256" key="6">
    <source>
        <dbReference type="SAM" id="MobiDB-lite"/>
    </source>
</evidence>
<dbReference type="EMBL" id="AJ250492">
    <property type="protein sequence ID" value="CAB59347.1"/>
    <property type="molecule type" value="Genomic_DNA"/>
</dbReference>
<dbReference type="EMBL" id="AJ250493">
    <property type="protein sequence ID" value="CAB59347.1"/>
    <property type="status" value="JOINED"/>
    <property type="molecule type" value="Genomic_DNA"/>
</dbReference>
<dbReference type="RefSeq" id="NP_001116545.1">
    <property type="nucleotide sequence ID" value="NM_001123073.1"/>
</dbReference>
<dbReference type="SMR" id="Q9TTM9"/>
<dbReference type="FunCoup" id="Q9TTM9">
    <property type="interactions" value="76"/>
</dbReference>
<dbReference type="STRING" id="9823.ENSSSCP00000007601"/>
<dbReference type="GlyCosmos" id="Q9TTM9">
    <property type="glycosylation" value="2 sites, No reported glycans"/>
</dbReference>
<dbReference type="GlyGen" id="Q9TTM9">
    <property type="glycosylation" value="2 sites"/>
</dbReference>
<dbReference type="PaxDb" id="9823-ENSSSCP00000007601"/>
<dbReference type="Ensembl" id="ENSSSCT00035043847.1">
    <property type="protein sequence ID" value="ENSSSCP00035017550.1"/>
    <property type="gene ID" value="ENSSSCG00035033096.1"/>
</dbReference>
<dbReference type="Ensembl" id="ENSSSCT00130041211">
    <property type="protein sequence ID" value="ENSSSCP00130029034"/>
    <property type="gene ID" value="ENSSSCG00130021260"/>
</dbReference>
<dbReference type="GeneID" id="552898"/>
<dbReference type="KEGG" id="ssc:552898"/>
<dbReference type="CTD" id="146"/>
<dbReference type="eggNOG" id="KOG3656">
    <property type="taxonomic scope" value="Eukaryota"/>
</dbReference>
<dbReference type="InParanoid" id="Q9TTM9"/>
<dbReference type="OrthoDB" id="5977853at2759"/>
<dbReference type="Reactome" id="R-SSC-390696">
    <property type="pathway name" value="Adrenoceptors"/>
</dbReference>
<dbReference type="Reactome" id="R-SSC-416476">
    <property type="pathway name" value="G alpha (q) signalling events"/>
</dbReference>
<dbReference type="Reactome" id="R-SSC-416482">
    <property type="pathway name" value="G alpha (12/13) signalling events"/>
</dbReference>
<dbReference type="Proteomes" id="UP000008227">
    <property type="component" value="Unplaced"/>
</dbReference>
<dbReference type="Proteomes" id="UP000314985">
    <property type="component" value="Unplaced"/>
</dbReference>
<dbReference type="Proteomes" id="UP000694570">
    <property type="component" value="Unplaced"/>
</dbReference>
<dbReference type="Proteomes" id="UP000694571">
    <property type="component" value="Unplaced"/>
</dbReference>
<dbReference type="Proteomes" id="UP000694720">
    <property type="component" value="Unplaced"/>
</dbReference>
<dbReference type="Proteomes" id="UP000694722">
    <property type="component" value="Unplaced"/>
</dbReference>
<dbReference type="Proteomes" id="UP000694723">
    <property type="component" value="Unplaced"/>
</dbReference>
<dbReference type="Proteomes" id="UP000694724">
    <property type="component" value="Unplaced"/>
</dbReference>
<dbReference type="Proteomes" id="UP000694725">
    <property type="component" value="Unplaced"/>
</dbReference>
<dbReference type="Proteomes" id="UP000694726">
    <property type="component" value="Unplaced"/>
</dbReference>
<dbReference type="Proteomes" id="UP000694727">
    <property type="component" value="Unplaced"/>
</dbReference>
<dbReference type="Proteomes" id="UP000694728">
    <property type="component" value="Unplaced"/>
</dbReference>
<dbReference type="GO" id="GO:0005886">
    <property type="term" value="C:plasma membrane"/>
    <property type="evidence" value="ECO:0000318"/>
    <property type="project" value="GO_Central"/>
</dbReference>
<dbReference type="GO" id="GO:0004937">
    <property type="term" value="F:alpha1-adrenergic receptor activity"/>
    <property type="evidence" value="ECO:0000318"/>
    <property type="project" value="GO_Central"/>
</dbReference>
<dbReference type="GO" id="GO:0071880">
    <property type="term" value="P:adenylate cyclase-activating adrenergic receptor signaling pathway"/>
    <property type="evidence" value="ECO:0000318"/>
    <property type="project" value="GO_Central"/>
</dbReference>
<dbReference type="GO" id="GO:0007267">
    <property type="term" value="P:cell-cell signaling"/>
    <property type="evidence" value="ECO:0000318"/>
    <property type="project" value="GO_Central"/>
</dbReference>
<dbReference type="GO" id="GO:0007200">
    <property type="term" value="P:phospholipase C-activating G protein-coupled receptor signaling pathway"/>
    <property type="evidence" value="ECO:0000318"/>
    <property type="project" value="GO_Central"/>
</dbReference>
<dbReference type="GO" id="GO:0007204">
    <property type="term" value="P:positive regulation of cytosolic calcium ion concentration"/>
    <property type="evidence" value="ECO:0000318"/>
    <property type="project" value="GO_Central"/>
</dbReference>
<dbReference type="GO" id="GO:0043410">
    <property type="term" value="P:positive regulation of MAPK cascade"/>
    <property type="evidence" value="ECO:0000318"/>
    <property type="project" value="GO_Central"/>
</dbReference>
<dbReference type="GO" id="GO:0045907">
    <property type="term" value="P:positive regulation of vasoconstriction"/>
    <property type="evidence" value="ECO:0000318"/>
    <property type="project" value="GO_Central"/>
</dbReference>
<dbReference type="FunFam" id="1.20.1070.10:FF:000208">
    <property type="entry name" value="Alpha-1D adrenergic receptor"/>
    <property type="match status" value="1"/>
</dbReference>
<dbReference type="Gene3D" id="1.20.1070.10">
    <property type="entry name" value="Rhodopsin 7-helix transmembrane proteins"/>
    <property type="match status" value="1"/>
</dbReference>
<dbReference type="InterPro" id="IPR002233">
    <property type="entry name" value="ADR_fam"/>
</dbReference>
<dbReference type="InterPro" id="IPR000363">
    <property type="entry name" value="ADRA1D_rcpt"/>
</dbReference>
<dbReference type="InterPro" id="IPR000276">
    <property type="entry name" value="GPCR_Rhodpsn"/>
</dbReference>
<dbReference type="InterPro" id="IPR017452">
    <property type="entry name" value="GPCR_Rhodpsn_7TM"/>
</dbReference>
<dbReference type="PANTHER" id="PTHR24248">
    <property type="entry name" value="ADRENERGIC RECEPTOR-RELATED G-PROTEIN COUPLED RECEPTOR"/>
    <property type="match status" value="1"/>
</dbReference>
<dbReference type="PANTHER" id="PTHR24248:SF14">
    <property type="entry name" value="ALPHA-1D ADRENERGIC RECEPTOR"/>
    <property type="match status" value="1"/>
</dbReference>
<dbReference type="Pfam" id="PF00001">
    <property type="entry name" value="7tm_1"/>
    <property type="match status" value="1"/>
</dbReference>
<dbReference type="PRINTS" id="PR01103">
    <property type="entry name" value="ADRENERGICR"/>
</dbReference>
<dbReference type="PRINTS" id="PR00240">
    <property type="entry name" value="ADRENRGCA1DR"/>
</dbReference>
<dbReference type="PRINTS" id="PR00237">
    <property type="entry name" value="GPCRRHODOPSN"/>
</dbReference>
<dbReference type="SMART" id="SM01381">
    <property type="entry name" value="7TM_GPCR_Srsx"/>
    <property type="match status" value="1"/>
</dbReference>
<dbReference type="SUPFAM" id="SSF81321">
    <property type="entry name" value="Family A G protein-coupled receptor-like"/>
    <property type="match status" value="1"/>
</dbReference>
<dbReference type="PROSITE" id="PS00237">
    <property type="entry name" value="G_PROTEIN_RECEP_F1_1"/>
    <property type="match status" value="1"/>
</dbReference>
<dbReference type="PROSITE" id="PS50262">
    <property type="entry name" value="G_PROTEIN_RECEP_F1_2"/>
    <property type="match status" value="1"/>
</dbReference>